<protein>
    <recommendedName>
        <fullName evidence="1">Pyridoxine/pyridoxamine 5'-phosphate oxidase</fullName>
        <ecNumber evidence="1">1.4.3.5</ecNumber>
    </recommendedName>
    <alternativeName>
        <fullName evidence="1">PNP/PMP oxidase</fullName>
        <shortName evidence="1">PNPOx</shortName>
    </alternativeName>
    <alternativeName>
        <fullName evidence="1">Pyridoxal 5'-phosphate synthase</fullName>
    </alternativeName>
</protein>
<proteinExistence type="inferred from homology"/>
<feature type="chain" id="PRO_0000167732" description="Pyridoxine/pyridoxamine 5'-phosphate oxidase">
    <location>
        <begin position="1"/>
        <end position="217"/>
    </location>
</feature>
<feature type="binding site" evidence="1">
    <location>
        <begin position="13"/>
        <end position="16"/>
    </location>
    <ligand>
        <name>substrate</name>
    </ligand>
</feature>
<feature type="binding site" evidence="1">
    <location>
        <begin position="66"/>
        <end position="71"/>
    </location>
    <ligand>
        <name>FMN</name>
        <dbReference type="ChEBI" id="CHEBI:58210"/>
    </ligand>
</feature>
<feature type="binding site" evidence="1">
    <location>
        <position position="71"/>
    </location>
    <ligand>
        <name>substrate</name>
    </ligand>
</feature>
<feature type="binding site" evidence="1">
    <location>
        <begin position="81"/>
        <end position="82"/>
    </location>
    <ligand>
        <name>FMN</name>
        <dbReference type="ChEBI" id="CHEBI:58210"/>
    </ligand>
</feature>
<feature type="binding site" evidence="1">
    <location>
        <position position="87"/>
    </location>
    <ligand>
        <name>FMN</name>
        <dbReference type="ChEBI" id="CHEBI:58210"/>
    </ligand>
</feature>
<feature type="binding site" evidence="1">
    <location>
        <position position="88"/>
    </location>
    <ligand>
        <name>FMN</name>
        <dbReference type="ChEBI" id="CHEBI:58210"/>
    </ligand>
</feature>
<feature type="binding site" evidence="1">
    <location>
        <position position="110"/>
    </location>
    <ligand>
        <name>FMN</name>
        <dbReference type="ChEBI" id="CHEBI:58210"/>
    </ligand>
</feature>
<feature type="binding site" evidence="1">
    <location>
        <position position="128"/>
    </location>
    <ligand>
        <name>substrate</name>
    </ligand>
</feature>
<feature type="binding site" evidence="1">
    <location>
        <position position="132"/>
    </location>
    <ligand>
        <name>substrate</name>
    </ligand>
</feature>
<feature type="binding site" evidence="1">
    <location>
        <position position="136"/>
    </location>
    <ligand>
        <name>substrate</name>
    </ligand>
</feature>
<feature type="binding site" evidence="1">
    <location>
        <begin position="145"/>
        <end position="146"/>
    </location>
    <ligand>
        <name>FMN</name>
        <dbReference type="ChEBI" id="CHEBI:58210"/>
    </ligand>
</feature>
<feature type="binding site" evidence="1">
    <location>
        <position position="190"/>
    </location>
    <ligand>
        <name>FMN</name>
        <dbReference type="ChEBI" id="CHEBI:58210"/>
    </ligand>
</feature>
<feature type="binding site" evidence="1">
    <location>
        <begin position="196"/>
        <end position="198"/>
    </location>
    <ligand>
        <name>substrate</name>
    </ligand>
</feature>
<feature type="binding site" evidence="1">
    <location>
        <position position="200"/>
    </location>
    <ligand>
        <name>FMN</name>
        <dbReference type="ChEBI" id="CHEBI:58210"/>
    </ligand>
</feature>
<name>PDXH_PHOLL</name>
<reference key="1">
    <citation type="journal article" date="2003" name="Nat. Biotechnol.">
        <title>The genome sequence of the entomopathogenic bacterium Photorhabdus luminescens.</title>
        <authorList>
            <person name="Duchaud E."/>
            <person name="Rusniok C."/>
            <person name="Frangeul L."/>
            <person name="Buchrieser C."/>
            <person name="Givaudan A."/>
            <person name="Taourit S."/>
            <person name="Bocs S."/>
            <person name="Boursaux-Eude C."/>
            <person name="Chandler M."/>
            <person name="Charles J.-F."/>
            <person name="Dassa E."/>
            <person name="Derose R."/>
            <person name="Derzelle S."/>
            <person name="Freyssinet G."/>
            <person name="Gaudriault S."/>
            <person name="Medigue C."/>
            <person name="Lanois A."/>
            <person name="Powell K."/>
            <person name="Siguier P."/>
            <person name="Vincent R."/>
            <person name="Wingate V."/>
            <person name="Zouine M."/>
            <person name="Glaser P."/>
            <person name="Boemare N."/>
            <person name="Danchin A."/>
            <person name="Kunst F."/>
        </authorList>
    </citation>
    <scope>NUCLEOTIDE SEQUENCE [LARGE SCALE GENOMIC DNA]</scope>
    <source>
        <strain>DSM 15139 / CIP 105565 / TT01</strain>
    </source>
</reference>
<gene>
    <name evidence="1" type="primary">pdxH</name>
    <name type="ordered locus">plu2597</name>
</gene>
<dbReference type="EC" id="1.4.3.5" evidence="1"/>
<dbReference type="EMBL" id="BX571867">
    <property type="protein sequence ID" value="CAE14971.1"/>
    <property type="molecule type" value="Genomic_DNA"/>
</dbReference>
<dbReference type="RefSeq" id="WP_011146819.1">
    <property type="nucleotide sequence ID" value="NC_005126.1"/>
</dbReference>
<dbReference type="SMR" id="Q7N3W5"/>
<dbReference type="STRING" id="243265.plu2597"/>
<dbReference type="GeneID" id="48848856"/>
<dbReference type="KEGG" id="plu:plu2597"/>
<dbReference type="eggNOG" id="COG0259">
    <property type="taxonomic scope" value="Bacteria"/>
</dbReference>
<dbReference type="HOGENOM" id="CLU_032263_2_2_6"/>
<dbReference type="OrthoDB" id="9780392at2"/>
<dbReference type="UniPathway" id="UPA01068">
    <property type="reaction ID" value="UER00304"/>
</dbReference>
<dbReference type="UniPathway" id="UPA01068">
    <property type="reaction ID" value="UER00305"/>
</dbReference>
<dbReference type="Proteomes" id="UP000002514">
    <property type="component" value="Chromosome"/>
</dbReference>
<dbReference type="GO" id="GO:0010181">
    <property type="term" value="F:FMN binding"/>
    <property type="evidence" value="ECO:0007669"/>
    <property type="project" value="UniProtKB-UniRule"/>
</dbReference>
<dbReference type="GO" id="GO:0004733">
    <property type="term" value="F:pyridoxamine phosphate oxidase activity"/>
    <property type="evidence" value="ECO:0007669"/>
    <property type="project" value="UniProtKB-UniRule"/>
</dbReference>
<dbReference type="GO" id="GO:0008615">
    <property type="term" value="P:pyridoxine biosynthetic process"/>
    <property type="evidence" value="ECO:0007669"/>
    <property type="project" value="UniProtKB-KW"/>
</dbReference>
<dbReference type="FunFam" id="2.30.110.10:FF:000001">
    <property type="entry name" value="Pyridoxine/pyridoxamine 5'-phosphate oxidase"/>
    <property type="match status" value="1"/>
</dbReference>
<dbReference type="Gene3D" id="2.30.110.10">
    <property type="entry name" value="Electron Transport, Fmn-binding Protein, Chain A"/>
    <property type="match status" value="1"/>
</dbReference>
<dbReference type="HAMAP" id="MF_01629">
    <property type="entry name" value="PdxH"/>
    <property type="match status" value="1"/>
</dbReference>
<dbReference type="InterPro" id="IPR000659">
    <property type="entry name" value="Pyridox_Oxase"/>
</dbReference>
<dbReference type="InterPro" id="IPR019740">
    <property type="entry name" value="Pyridox_Oxase_CS"/>
</dbReference>
<dbReference type="InterPro" id="IPR011576">
    <property type="entry name" value="Pyridox_Oxase_N"/>
</dbReference>
<dbReference type="InterPro" id="IPR019576">
    <property type="entry name" value="Pyridoxamine_oxidase_dimer_C"/>
</dbReference>
<dbReference type="InterPro" id="IPR012349">
    <property type="entry name" value="Split_barrel_FMN-bd"/>
</dbReference>
<dbReference type="NCBIfam" id="TIGR00558">
    <property type="entry name" value="pdxH"/>
    <property type="match status" value="1"/>
</dbReference>
<dbReference type="NCBIfam" id="NF004231">
    <property type="entry name" value="PRK05679.1"/>
    <property type="match status" value="1"/>
</dbReference>
<dbReference type="PANTHER" id="PTHR10851:SF0">
    <property type="entry name" value="PYRIDOXINE-5'-PHOSPHATE OXIDASE"/>
    <property type="match status" value="1"/>
</dbReference>
<dbReference type="PANTHER" id="PTHR10851">
    <property type="entry name" value="PYRIDOXINE-5-PHOSPHATE OXIDASE"/>
    <property type="match status" value="1"/>
</dbReference>
<dbReference type="Pfam" id="PF10590">
    <property type="entry name" value="PNP_phzG_C"/>
    <property type="match status" value="1"/>
</dbReference>
<dbReference type="Pfam" id="PF01243">
    <property type="entry name" value="PNPOx_N"/>
    <property type="match status" value="1"/>
</dbReference>
<dbReference type="PIRSF" id="PIRSF000190">
    <property type="entry name" value="Pyd_amn-ph_oxd"/>
    <property type="match status" value="1"/>
</dbReference>
<dbReference type="SUPFAM" id="SSF50475">
    <property type="entry name" value="FMN-binding split barrel"/>
    <property type="match status" value="1"/>
</dbReference>
<dbReference type="PROSITE" id="PS01064">
    <property type="entry name" value="PYRIDOX_OXIDASE"/>
    <property type="match status" value="1"/>
</dbReference>
<organism>
    <name type="scientific">Photorhabdus laumondii subsp. laumondii (strain DSM 15139 / CIP 105565 / TT01)</name>
    <name type="common">Photorhabdus luminescens subsp. laumondii</name>
    <dbReference type="NCBI Taxonomy" id="243265"/>
    <lineage>
        <taxon>Bacteria</taxon>
        <taxon>Pseudomonadati</taxon>
        <taxon>Pseudomonadota</taxon>
        <taxon>Gammaproteobacteria</taxon>
        <taxon>Enterobacterales</taxon>
        <taxon>Morganellaceae</taxon>
        <taxon>Photorhabdus</taxon>
    </lineage>
</organism>
<sequence>MSEHNEFDVAELRREYIRGGLRRKDLTEEPIELFERWLNQACNAKLSDPTAMSIATVDENGQPYQRIVLLKHFDSNSLIFYTNLGSRKAKHLAHNNKISLHFPWYPLERQVSFLGKAERLSPVEVVKYFHSRPRDSQIAAWASQQSSRISARGVLEGKFLELKQKFLNGEVPLPSFWGGFKVTFDSVEFWQGGANRLHDRFIYQRQGDSWHVDRLAP</sequence>
<accession>Q7N3W5</accession>
<keyword id="KW-0285">Flavoprotein</keyword>
<keyword id="KW-0288">FMN</keyword>
<keyword id="KW-0560">Oxidoreductase</keyword>
<keyword id="KW-0664">Pyridoxine biosynthesis</keyword>
<keyword id="KW-1185">Reference proteome</keyword>
<comment type="function">
    <text evidence="1">Catalyzes the oxidation of either pyridoxine 5'-phosphate (PNP) or pyridoxamine 5'-phosphate (PMP) into pyridoxal 5'-phosphate (PLP).</text>
</comment>
<comment type="catalytic activity">
    <reaction evidence="1">
        <text>pyridoxamine 5'-phosphate + O2 + H2O = pyridoxal 5'-phosphate + H2O2 + NH4(+)</text>
        <dbReference type="Rhea" id="RHEA:15817"/>
        <dbReference type="ChEBI" id="CHEBI:15377"/>
        <dbReference type="ChEBI" id="CHEBI:15379"/>
        <dbReference type="ChEBI" id="CHEBI:16240"/>
        <dbReference type="ChEBI" id="CHEBI:28938"/>
        <dbReference type="ChEBI" id="CHEBI:58451"/>
        <dbReference type="ChEBI" id="CHEBI:597326"/>
        <dbReference type="EC" id="1.4.3.5"/>
    </reaction>
</comment>
<comment type="catalytic activity">
    <reaction evidence="1">
        <text>pyridoxine 5'-phosphate + O2 = pyridoxal 5'-phosphate + H2O2</text>
        <dbReference type="Rhea" id="RHEA:15149"/>
        <dbReference type="ChEBI" id="CHEBI:15379"/>
        <dbReference type="ChEBI" id="CHEBI:16240"/>
        <dbReference type="ChEBI" id="CHEBI:58589"/>
        <dbReference type="ChEBI" id="CHEBI:597326"/>
        <dbReference type="EC" id="1.4.3.5"/>
    </reaction>
</comment>
<comment type="cofactor">
    <cofactor evidence="1">
        <name>FMN</name>
        <dbReference type="ChEBI" id="CHEBI:58210"/>
    </cofactor>
    <text evidence="1">Binds 1 FMN per subunit.</text>
</comment>
<comment type="pathway">
    <text evidence="1">Cofactor metabolism; pyridoxal 5'-phosphate salvage; pyridoxal 5'-phosphate from pyridoxamine 5'-phosphate: step 1/1.</text>
</comment>
<comment type="pathway">
    <text evidence="1">Cofactor metabolism; pyridoxal 5'-phosphate salvage; pyridoxal 5'-phosphate from pyridoxine 5'-phosphate: step 1/1.</text>
</comment>
<comment type="subunit">
    <text evidence="1">Homodimer.</text>
</comment>
<comment type="similarity">
    <text evidence="1">Belongs to the pyridoxamine 5'-phosphate oxidase family.</text>
</comment>
<evidence type="ECO:0000255" key="1">
    <source>
        <dbReference type="HAMAP-Rule" id="MF_01629"/>
    </source>
</evidence>